<dbReference type="EMBL" id="CP000570">
    <property type="protein sequence ID" value="ABN85225.1"/>
    <property type="molecule type" value="Genomic_DNA"/>
</dbReference>
<dbReference type="RefSeq" id="WP_011851749.1">
    <property type="nucleotide sequence ID" value="NC_009074.1"/>
</dbReference>
<dbReference type="SMR" id="A3NAB3"/>
<dbReference type="KEGG" id="bpd:BURPS668_2249"/>
<dbReference type="HOGENOM" id="CLU_078938_4_1_4"/>
<dbReference type="GO" id="GO:1990904">
    <property type="term" value="C:ribonucleoprotein complex"/>
    <property type="evidence" value="ECO:0007669"/>
    <property type="project" value="UniProtKB-KW"/>
</dbReference>
<dbReference type="GO" id="GO:0005840">
    <property type="term" value="C:ribosome"/>
    <property type="evidence" value="ECO:0007669"/>
    <property type="project" value="UniProtKB-KW"/>
</dbReference>
<dbReference type="GO" id="GO:0019843">
    <property type="term" value="F:rRNA binding"/>
    <property type="evidence" value="ECO:0007669"/>
    <property type="project" value="UniProtKB-UniRule"/>
</dbReference>
<dbReference type="GO" id="GO:0003735">
    <property type="term" value="F:structural constituent of ribosome"/>
    <property type="evidence" value="ECO:0007669"/>
    <property type="project" value="InterPro"/>
</dbReference>
<dbReference type="GO" id="GO:0006412">
    <property type="term" value="P:translation"/>
    <property type="evidence" value="ECO:0007669"/>
    <property type="project" value="UniProtKB-UniRule"/>
</dbReference>
<dbReference type="Gene3D" id="3.10.430.100">
    <property type="entry name" value="Ribosomal protein L9, C-terminal domain"/>
    <property type="match status" value="1"/>
</dbReference>
<dbReference type="Gene3D" id="3.40.5.10">
    <property type="entry name" value="Ribosomal protein L9, N-terminal domain"/>
    <property type="match status" value="1"/>
</dbReference>
<dbReference type="HAMAP" id="MF_00503">
    <property type="entry name" value="Ribosomal_bL9"/>
    <property type="match status" value="1"/>
</dbReference>
<dbReference type="InterPro" id="IPR000244">
    <property type="entry name" value="Ribosomal_bL9"/>
</dbReference>
<dbReference type="InterPro" id="IPR009027">
    <property type="entry name" value="Ribosomal_bL9/RNase_H1_N"/>
</dbReference>
<dbReference type="InterPro" id="IPR020594">
    <property type="entry name" value="Ribosomal_bL9_bac/chp"/>
</dbReference>
<dbReference type="InterPro" id="IPR020069">
    <property type="entry name" value="Ribosomal_bL9_C"/>
</dbReference>
<dbReference type="InterPro" id="IPR036791">
    <property type="entry name" value="Ribosomal_bL9_C_sf"/>
</dbReference>
<dbReference type="InterPro" id="IPR020070">
    <property type="entry name" value="Ribosomal_bL9_N"/>
</dbReference>
<dbReference type="InterPro" id="IPR036935">
    <property type="entry name" value="Ribosomal_bL9_N_sf"/>
</dbReference>
<dbReference type="NCBIfam" id="TIGR00158">
    <property type="entry name" value="L9"/>
    <property type="match status" value="1"/>
</dbReference>
<dbReference type="PANTHER" id="PTHR21368">
    <property type="entry name" value="50S RIBOSOMAL PROTEIN L9"/>
    <property type="match status" value="1"/>
</dbReference>
<dbReference type="Pfam" id="PF03948">
    <property type="entry name" value="Ribosomal_L9_C"/>
    <property type="match status" value="1"/>
</dbReference>
<dbReference type="Pfam" id="PF01281">
    <property type="entry name" value="Ribosomal_L9_N"/>
    <property type="match status" value="1"/>
</dbReference>
<dbReference type="SUPFAM" id="SSF55658">
    <property type="entry name" value="L9 N-domain-like"/>
    <property type="match status" value="1"/>
</dbReference>
<dbReference type="SUPFAM" id="SSF55653">
    <property type="entry name" value="Ribosomal protein L9 C-domain"/>
    <property type="match status" value="1"/>
</dbReference>
<dbReference type="PROSITE" id="PS00651">
    <property type="entry name" value="RIBOSOMAL_L9"/>
    <property type="match status" value="1"/>
</dbReference>
<accession>A3NAB3</accession>
<keyword id="KW-0687">Ribonucleoprotein</keyword>
<keyword id="KW-0689">Ribosomal protein</keyword>
<keyword id="KW-0694">RNA-binding</keyword>
<keyword id="KW-0699">rRNA-binding</keyword>
<protein>
    <recommendedName>
        <fullName evidence="1">Large ribosomal subunit protein bL9</fullName>
    </recommendedName>
    <alternativeName>
        <fullName evidence="2">50S ribosomal protein L9</fullName>
    </alternativeName>
</protein>
<proteinExistence type="inferred from homology"/>
<gene>
    <name evidence="1" type="primary">rplI</name>
    <name type="ordered locus">BURPS668_2249</name>
</gene>
<comment type="function">
    <text evidence="1">Binds to the 23S rRNA.</text>
</comment>
<comment type="similarity">
    <text evidence="1">Belongs to the bacterial ribosomal protein bL9 family.</text>
</comment>
<sequence length="150" mass="16259">MQIILLEKVANLGNLGDIVKVKDGYARNFLIPNRKARRATKDAIAEFEVRRAELEKVAAEKLAAAQAVGEKLNGQTFEITQKSGVDGRLFGSVTNGDVAELLKKAGYEIEKAQVRMPEGPLKMIGEHGVQVALHTDVLVDVTVNVIGDHA</sequence>
<feature type="chain" id="PRO_1000014755" description="Large ribosomal subunit protein bL9">
    <location>
        <begin position="1"/>
        <end position="150"/>
    </location>
</feature>
<organism>
    <name type="scientific">Burkholderia pseudomallei (strain 668)</name>
    <dbReference type="NCBI Taxonomy" id="320373"/>
    <lineage>
        <taxon>Bacteria</taxon>
        <taxon>Pseudomonadati</taxon>
        <taxon>Pseudomonadota</taxon>
        <taxon>Betaproteobacteria</taxon>
        <taxon>Burkholderiales</taxon>
        <taxon>Burkholderiaceae</taxon>
        <taxon>Burkholderia</taxon>
        <taxon>pseudomallei group</taxon>
    </lineage>
</organism>
<reference key="1">
    <citation type="journal article" date="2010" name="Genome Biol. Evol.">
        <title>Continuing evolution of Burkholderia mallei through genome reduction and large-scale rearrangements.</title>
        <authorList>
            <person name="Losada L."/>
            <person name="Ronning C.M."/>
            <person name="DeShazer D."/>
            <person name="Woods D."/>
            <person name="Fedorova N."/>
            <person name="Kim H.S."/>
            <person name="Shabalina S.A."/>
            <person name="Pearson T.R."/>
            <person name="Brinkac L."/>
            <person name="Tan P."/>
            <person name="Nandi T."/>
            <person name="Crabtree J."/>
            <person name="Badger J."/>
            <person name="Beckstrom-Sternberg S."/>
            <person name="Saqib M."/>
            <person name="Schutzer S.E."/>
            <person name="Keim P."/>
            <person name="Nierman W.C."/>
        </authorList>
    </citation>
    <scope>NUCLEOTIDE SEQUENCE [LARGE SCALE GENOMIC DNA]</scope>
    <source>
        <strain>668</strain>
    </source>
</reference>
<evidence type="ECO:0000255" key="1">
    <source>
        <dbReference type="HAMAP-Rule" id="MF_00503"/>
    </source>
</evidence>
<evidence type="ECO:0000305" key="2"/>
<name>RL9_BURP6</name>